<reference key="1">
    <citation type="journal article" date="2004" name="DNA Res.">
        <title>Complete nucleotide sequence of the sugarcane (Saccharum officinarum) chloroplast genome: a comparative analysis of four monocot chloroplast genomes.</title>
        <authorList>
            <person name="Asano T."/>
            <person name="Tsudzuki T."/>
            <person name="Takahashi S."/>
            <person name="Shimada H."/>
            <person name="Kadowaki K."/>
        </authorList>
    </citation>
    <scope>NUCLEOTIDE SEQUENCE [LARGE SCALE GENOMIC DNA]</scope>
</reference>
<evidence type="ECO:0000250" key="1"/>
<evidence type="ECO:0000305" key="2"/>
<gene>
    <name type="primary">rps8</name>
</gene>
<feature type="chain" id="PRO_0000126594" description="Small ribosomal subunit protein uS8c">
    <location>
        <begin position="1"/>
        <end position="136"/>
    </location>
</feature>
<name>RR8_SACOF</name>
<proteinExistence type="inferred from homology"/>
<comment type="function">
    <text evidence="1">One of the primary rRNA binding proteins, it binds directly to 16S rRNA central domain where it helps coordinate assembly of the platform of the 30S subunit.</text>
</comment>
<comment type="subunit">
    <text evidence="1">Part of the 30S ribosomal subunit.</text>
</comment>
<comment type="subcellular location">
    <subcellularLocation>
        <location>Plastid</location>
        <location>Chloroplast</location>
    </subcellularLocation>
</comment>
<comment type="similarity">
    <text evidence="2">Belongs to the universal ribosomal protein uS8 family.</text>
</comment>
<geneLocation type="chloroplast"/>
<dbReference type="EMBL" id="AP006714">
    <property type="protein sequence ID" value="BAD27328.1"/>
    <property type="molecule type" value="Genomic_DNA"/>
</dbReference>
<dbReference type="RefSeq" id="YP_009389606.1">
    <property type="nucleotide sequence ID" value="NC_035224.1"/>
</dbReference>
<dbReference type="SMR" id="Q6ENS8"/>
<dbReference type="GeneID" id="33347771"/>
<dbReference type="GO" id="GO:0009507">
    <property type="term" value="C:chloroplast"/>
    <property type="evidence" value="ECO:0007669"/>
    <property type="project" value="UniProtKB-SubCell"/>
</dbReference>
<dbReference type="GO" id="GO:1990904">
    <property type="term" value="C:ribonucleoprotein complex"/>
    <property type="evidence" value="ECO:0007669"/>
    <property type="project" value="UniProtKB-KW"/>
</dbReference>
<dbReference type="GO" id="GO:0005840">
    <property type="term" value="C:ribosome"/>
    <property type="evidence" value="ECO:0007669"/>
    <property type="project" value="UniProtKB-KW"/>
</dbReference>
<dbReference type="GO" id="GO:0019843">
    <property type="term" value="F:rRNA binding"/>
    <property type="evidence" value="ECO:0007669"/>
    <property type="project" value="UniProtKB-UniRule"/>
</dbReference>
<dbReference type="GO" id="GO:0003735">
    <property type="term" value="F:structural constituent of ribosome"/>
    <property type="evidence" value="ECO:0007669"/>
    <property type="project" value="InterPro"/>
</dbReference>
<dbReference type="GO" id="GO:0006412">
    <property type="term" value="P:translation"/>
    <property type="evidence" value="ECO:0007669"/>
    <property type="project" value="UniProtKB-UniRule"/>
</dbReference>
<dbReference type="FunFam" id="3.30.1490.10:FF:000001">
    <property type="entry name" value="30S ribosomal protein S8"/>
    <property type="match status" value="1"/>
</dbReference>
<dbReference type="FunFam" id="3.30.1370.30:FF:000004">
    <property type="entry name" value="30S ribosomal protein S8, chloroplastic"/>
    <property type="match status" value="1"/>
</dbReference>
<dbReference type="Gene3D" id="3.30.1370.30">
    <property type="match status" value="1"/>
</dbReference>
<dbReference type="Gene3D" id="3.30.1490.10">
    <property type="match status" value="1"/>
</dbReference>
<dbReference type="HAMAP" id="MF_01302_B">
    <property type="entry name" value="Ribosomal_uS8_B"/>
    <property type="match status" value="1"/>
</dbReference>
<dbReference type="InterPro" id="IPR000630">
    <property type="entry name" value="Ribosomal_uS8"/>
</dbReference>
<dbReference type="InterPro" id="IPR047863">
    <property type="entry name" value="Ribosomal_uS8_CS"/>
</dbReference>
<dbReference type="InterPro" id="IPR035987">
    <property type="entry name" value="Ribosomal_uS8_sf"/>
</dbReference>
<dbReference type="NCBIfam" id="NF001109">
    <property type="entry name" value="PRK00136.1"/>
    <property type="match status" value="1"/>
</dbReference>
<dbReference type="PANTHER" id="PTHR11758">
    <property type="entry name" value="40S RIBOSOMAL PROTEIN S15A"/>
    <property type="match status" value="1"/>
</dbReference>
<dbReference type="Pfam" id="PF00410">
    <property type="entry name" value="Ribosomal_S8"/>
    <property type="match status" value="1"/>
</dbReference>
<dbReference type="SUPFAM" id="SSF56047">
    <property type="entry name" value="Ribosomal protein S8"/>
    <property type="match status" value="1"/>
</dbReference>
<dbReference type="PROSITE" id="PS00053">
    <property type="entry name" value="RIBOSOMAL_S8"/>
    <property type="match status" value="1"/>
</dbReference>
<keyword id="KW-0150">Chloroplast</keyword>
<keyword id="KW-0934">Plastid</keyword>
<keyword id="KW-0687">Ribonucleoprotein</keyword>
<keyword id="KW-0689">Ribosomal protein</keyword>
<keyword id="KW-0694">RNA-binding</keyword>
<keyword id="KW-0699">rRNA-binding</keyword>
<accession>Q6ENS8</accession>
<sequence>MGKDTIADLLTSIRNADMNKKGTVRVVSTNITENIVKILLREGFIESVRKHQESNRYFLVSTLRHQRRKTRKGIYRTRTFLKRISRPGLRIYANYQGIPKVLGGMGIAILSTSRGIMTDREARLNRIGGEVLCYIW</sequence>
<protein>
    <recommendedName>
        <fullName evidence="2">Small ribosomal subunit protein uS8c</fullName>
    </recommendedName>
    <alternativeName>
        <fullName>30S ribosomal protein S8, chloroplastic</fullName>
    </alternativeName>
</protein>
<organism>
    <name type="scientific">Saccharum officinarum</name>
    <name type="common">Sugarcane</name>
    <dbReference type="NCBI Taxonomy" id="4547"/>
    <lineage>
        <taxon>Eukaryota</taxon>
        <taxon>Viridiplantae</taxon>
        <taxon>Streptophyta</taxon>
        <taxon>Embryophyta</taxon>
        <taxon>Tracheophyta</taxon>
        <taxon>Spermatophyta</taxon>
        <taxon>Magnoliopsida</taxon>
        <taxon>Liliopsida</taxon>
        <taxon>Poales</taxon>
        <taxon>Poaceae</taxon>
        <taxon>PACMAD clade</taxon>
        <taxon>Panicoideae</taxon>
        <taxon>Andropogonodae</taxon>
        <taxon>Andropogoneae</taxon>
        <taxon>Saccharinae</taxon>
        <taxon>Saccharum</taxon>
        <taxon>Saccharum officinarum species complex</taxon>
    </lineage>
</organism>